<evidence type="ECO:0000250" key="1">
    <source>
        <dbReference type="UniProtKB" id="F4K2F0"/>
    </source>
</evidence>
<evidence type="ECO:0000255" key="2"/>
<evidence type="ECO:0000255" key="3">
    <source>
        <dbReference type="PROSITE-ProRule" id="PRU00476"/>
    </source>
</evidence>
<evidence type="ECO:0000256" key="4">
    <source>
        <dbReference type="SAM" id="MobiDB-lite"/>
    </source>
</evidence>
<evidence type="ECO:0000269" key="5">
    <source>
    </source>
</evidence>
<evidence type="ECO:0000303" key="6">
    <source>
    </source>
</evidence>
<evidence type="ECO:0000305" key="7">
    <source>
    </source>
</evidence>
<evidence type="ECO:0000312" key="8">
    <source>
        <dbReference type="Araport" id="AT3G12140"/>
    </source>
</evidence>
<evidence type="ECO:0000312" key="9">
    <source>
        <dbReference type="EMBL" id="AAG51060.1"/>
    </source>
</evidence>
<evidence type="ECO:0000312" key="10">
    <source>
        <dbReference type="Proteomes" id="UP000006548"/>
    </source>
</evidence>
<keyword id="KW-0025">Alternative splicing</keyword>
<keyword id="KW-0175">Coiled coil</keyword>
<keyword id="KW-0539">Nucleus</keyword>
<keyword id="KW-0597">Phosphoprotein</keyword>
<keyword id="KW-0611">Plant defense</keyword>
<keyword id="KW-1185">Reference proteome</keyword>
<sequence>METQIHQLEQEAYTAVLRAFKAQSDAISWEKESLITELRKELRVSDDEHRELLSRVNKDDTIQRIRDWRQGGASQITRHATIQPFDVLPSPTFSAARKKQKTFPSYNPSIGATGNRSFNNRLVSSGISGNESAEALIGRKVWTKWPEDNHFYEAIITQYNADEGRHALVYDIHAANETWEWVDLKEIPPEDIRWDGEESGVALNIGHGSASFRGNRRGQIHGGRGRGPRIHQPRRELVPPPTQQNGSGGRRTSSDDIELFNTDSLVKEVERVFDSTHPDPLELDKAKKMLKEHEQALIAAIARLADTSDGEMDGDPPYSHDHPMPQG</sequence>
<protein>
    <recommendedName>
        <fullName evidence="6">Protein EMSY-LIKE 1</fullName>
        <shortName evidence="6">AtEML1</shortName>
    </recommendedName>
</protein>
<organism evidence="10">
    <name type="scientific">Arabidopsis thaliana</name>
    <name type="common">Mouse-ear cress</name>
    <dbReference type="NCBI Taxonomy" id="3702"/>
    <lineage>
        <taxon>Eukaryota</taxon>
        <taxon>Viridiplantae</taxon>
        <taxon>Streptophyta</taxon>
        <taxon>Embryophyta</taxon>
        <taxon>Tracheophyta</taxon>
        <taxon>Spermatophyta</taxon>
        <taxon>Magnoliopsida</taxon>
        <taxon>eudicotyledons</taxon>
        <taxon>Gunneridae</taxon>
        <taxon>Pentapetalae</taxon>
        <taxon>rosids</taxon>
        <taxon>malvids</taxon>
        <taxon>Brassicales</taxon>
        <taxon>Brassicaceae</taxon>
        <taxon>Camelineae</taxon>
        <taxon>Arabidopsis</taxon>
    </lineage>
</organism>
<proteinExistence type="evidence at protein level"/>
<comment type="function">
    <text evidence="5 7">Probably involved in the regulation of chromatin states (Probable). Contributes to RPP7-mediated and basal immunity, especially against Hyaloperonospora arabidopsidis isolate Hiks1. Regulates negatively EDM2-dependent floral transition (PubMed:21830950).</text>
</comment>
<comment type="subunit">
    <text evidence="5">Isoform 1 interacts with EDM2 in nucleus.</text>
</comment>
<comment type="subcellular location">
    <subcellularLocation>
        <location evidence="5">Nucleus</location>
    </subcellularLocation>
</comment>
<comment type="alternative products">
    <event type="alternative splicing"/>
    <isoform>
        <id>Q9C7C4-1</id>
        <name>1</name>
        <name evidence="6">v1</name>
        <name evidence="6">v2</name>
        <sequence type="displayed"/>
    </isoform>
    <isoform>
        <id>Q9C7C4-2</id>
        <name>2</name>
        <name evidence="6">v3</name>
        <sequence type="described" ref="VSP_057383"/>
    </isoform>
</comment>
<comment type="disruption phenotype">
    <text evidence="5">Reduced resistance to Hyaloperonospora arabidopsidis isolate Hiks1. Slight early flowering phenotype.</text>
</comment>
<feature type="chain" id="PRO_0000431791" description="Protein EMSY-LIKE 1">
    <location>
        <begin position="1"/>
        <end position="327"/>
    </location>
</feature>
<feature type="domain" description="ENT" evidence="3">
    <location>
        <begin position="1"/>
        <end position="88"/>
    </location>
</feature>
<feature type="region of interest" description="Disordered" evidence="4">
    <location>
        <begin position="206"/>
        <end position="257"/>
    </location>
</feature>
<feature type="region of interest" description="Disordered" evidence="4">
    <location>
        <begin position="305"/>
        <end position="327"/>
    </location>
</feature>
<feature type="coiled-coil region" evidence="2">
    <location>
        <begin position="32"/>
        <end position="58"/>
    </location>
</feature>
<feature type="coiled-coil region" evidence="2">
    <location>
        <begin position="281"/>
        <end position="306"/>
    </location>
</feature>
<feature type="compositionally biased region" description="Basic residues" evidence="4">
    <location>
        <begin position="214"/>
        <end position="232"/>
    </location>
</feature>
<feature type="compositionally biased region" description="Basic and acidic residues" evidence="4">
    <location>
        <begin position="318"/>
        <end position="327"/>
    </location>
</feature>
<feature type="modified residue" description="Phosphoserine" evidence="1">
    <location>
        <position position="308"/>
    </location>
</feature>
<feature type="splice variant" id="VSP_057383" description="In isoform 2.">
    <original>DGDPPYSHDHPMPQG</original>
    <variation>GNNNKSTLRLVCNLRIIYYLPLNFCVMMIISSIITNLILGKIIRELIHTCSACDFSVTCKQLNSLKYRSSS</variation>
    <location>
        <begin position="313"/>
        <end position="327"/>
    </location>
</feature>
<accession>Q9C7C4</accession>
<accession>Q9LH54</accession>
<name>EML1_ARATH</name>
<gene>
    <name evidence="6" type="primary">EML1</name>
    <name evidence="8" type="ordered locus">At3g12140</name>
    <name evidence="9" type="ORF">T21B14.4</name>
</gene>
<dbReference type="EMBL" id="AP002063">
    <property type="protein sequence ID" value="BAB01962.1"/>
    <property type="molecule type" value="Genomic_DNA"/>
</dbReference>
<dbReference type="EMBL" id="AC069473">
    <property type="protein sequence ID" value="AAG51060.1"/>
    <property type="molecule type" value="Genomic_DNA"/>
</dbReference>
<dbReference type="EMBL" id="CP002686">
    <property type="protein sequence ID" value="AEE75155.1"/>
    <property type="molecule type" value="Genomic_DNA"/>
</dbReference>
<dbReference type="EMBL" id="CP002686">
    <property type="protein sequence ID" value="AEE75156.1"/>
    <property type="molecule type" value="Genomic_DNA"/>
</dbReference>
<dbReference type="EMBL" id="CP002686">
    <property type="protein sequence ID" value="AEE75157.1"/>
    <property type="molecule type" value="Genomic_DNA"/>
</dbReference>
<dbReference type="EMBL" id="BT002758">
    <property type="protein sequence ID" value="AAO22586.1"/>
    <property type="molecule type" value="mRNA"/>
</dbReference>
<dbReference type="EMBL" id="AK226347">
    <property type="protein sequence ID" value="BAE98495.1"/>
    <property type="molecule type" value="mRNA"/>
</dbReference>
<dbReference type="RefSeq" id="NP_001030677.1">
    <molecule id="Q9C7C4-2"/>
    <property type="nucleotide sequence ID" value="NM_001035600.3"/>
</dbReference>
<dbReference type="RefSeq" id="NP_187821.1">
    <molecule id="Q9C7C4-1"/>
    <property type="nucleotide sequence ID" value="NM_112049.3"/>
</dbReference>
<dbReference type="RefSeq" id="NP_850568.1">
    <molecule id="Q9C7C4-1"/>
    <property type="nucleotide sequence ID" value="NM_180237.3"/>
</dbReference>
<dbReference type="SMR" id="Q9C7C4"/>
<dbReference type="FunCoup" id="Q9C7C4">
    <property type="interactions" value="132"/>
</dbReference>
<dbReference type="IntAct" id="Q9C7C4">
    <property type="interactions" value="1"/>
</dbReference>
<dbReference type="STRING" id="3702.Q9C7C4"/>
<dbReference type="iPTMnet" id="Q9C7C4"/>
<dbReference type="PaxDb" id="3702-AT3G12140.3"/>
<dbReference type="ProteomicsDB" id="220357">
    <molecule id="Q9C7C4-1"/>
</dbReference>
<dbReference type="EnsemblPlants" id="AT3G12140.1">
    <molecule id="Q9C7C4-1"/>
    <property type="protein sequence ID" value="AT3G12140.1"/>
    <property type="gene ID" value="AT3G12140"/>
</dbReference>
<dbReference type="EnsemblPlants" id="AT3G12140.2">
    <molecule id="Q9C7C4-1"/>
    <property type="protein sequence ID" value="AT3G12140.2"/>
    <property type="gene ID" value="AT3G12140"/>
</dbReference>
<dbReference type="EnsemblPlants" id="AT3G12140.3">
    <molecule id="Q9C7C4-2"/>
    <property type="protein sequence ID" value="AT3G12140.3"/>
    <property type="gene ID" value="AT3G12140"/>
</dbReference>
<dbReference type="GeneID" id="820389"/>
<dbReference type="Gramene" id="AT3G12140.1">
    <molecule id="Q9C7C4-1"/>
    <property type="protein sequence ID" value="AT3G12140.1"/>
    <property type="gene ID" value="AT3G12140"/>
</dbReference>
<dbReference type="Gramene" id="AT3G12140.2">
    <molecule id="Q9C7C4-1"/>
    <property type="protein sequence ID" value="AT3G12140.2"/>
    <property type="gene ID" value="AT3G12140"/>
</dbReference>
<dbReference type="Gramene" id="AT3G12140.3">
    <molecule id="Q9C7C4-2"/>
    <property type="protein sequence ID" value="AT3G12140.3"/>
    <property type="gene ID" value="AT3G12140"/>
</dbReference>
<dbReference type="KEGG" id="ath:AT3G12140"/>
<dbReference type="Araport" id="AT3G12140"/>
<dbReference type="TAIR" id="AT3G12140">
    <property type="gene designation" value="EML1"/>
</dbReference>
<dbReference type="eggNOG" id="KOG4675">
    <property type="taxonomic scope" value="Eukaryota"/>
</dbReference>
<dbReference type="HOGENOM" id="CLU_038636_0_0_1"/>
<dbReference type="InParanoid" id="Q9C7C4"/>
<dbReference type="OMA" id="QSNIGRG"/>
<dbReference type="OrthoDB" id="1737049at2759"/>
<dbReference type="PhylomeDB" id="Q9C7C4"/>
<dbReference type="PRO" id="PR:Q9C7C4"/>
<dbReference type="Proteomes" id="UP000006548">
    <property type="component" value="Chromosome 3"/>
</dbReference>
<dbReference type="ExpressionAtlas" id="Q9C7C4">
    <property type="expression patterns" value="baseline and differential"/>
</dbReference>
<dbReference type="GO" id="GO:0005634">
    <property type="term" value="C:nucleus"/>
    <property type="evidence" value="ECO:0000314"/>
    <property type="project" value="UniProtKB"/>
</dbReference>
<dbReference type="GO" id="GO:0003682">
    <property type="term" value="F:chromatin binding"/>
    <property type="evidence" value="ECO:0000314"/>
    <property type="project" value="TAIR"/>
</dbReference>
<dbReference type="GO" id="GO:0050832">
    <property type="term" value="P:defense response to fungus"/>
    <property type="evidence" value="ECO:0000315"/>
    <property type="project" value="UniProtKB"/>
</dbReference>
<dbReference type="GO" id="GO:0010228">
    <property type="term" value="P:vegetative to reproductive phase transition of meristem"/>
    <property type="evidence" value="ECO:0000315"/>
    <property type="project" value="UniProtKB"/>
</dbReference>
<dbReference type="CDD" id="cd20404">
    <property type="entry name" value="Tudor_Agenet_AtEML-like"/>
    <property type="match status" value="1"/>
</dbReference>
<dbReference type="FunFam" id="1.10.1240.40:FF:000004">
    <property type="entry name" value="Protein EMSY-LIKE 4"/>
    <property type="match status" value="1"/>
</dbReference>
<dbReference type="Gene3D" id="2.30.30.140">
    <property type="match status" value="1"/>
</dbReference>
<dbReference type="Gene3D" id="1.10.1240.40">
    <property type="entry name" value="ENT domain"/>
    <property type="match status" value="1"/>
</dbReference>
<dbReference type="InterPro" id="IPR014002">
    <property type="entry name" value="Agenet_dom_plant"/>
</dbReference>
<dbReference type="InterPro" id="IPR033485">
    <property type="entry name" value="EMSY-LIKE_plant"/>
</dbReference>
<dbReference type="InterPro" id="IPR005491">
    <property type="entry name" value="ENT_dom"/>
</dbReference>
<dbReference type="InterPro" id="IPR036142">
    <property type="entry name" value="ENT_dom-like_sf"/>
</dbReference>
<dbReference type="PANTHER" id="PTHR33432:SF20">
    <property type="entry name" value="PROTEIN EMSY-LIKE 1"/>
    <property type="match status" value="1"/>
</dbReference>
<dbReference type="PANTHER" id="PTHR33432">
    <property type="entry name" value="PROTEIN EMSY-LIKE 4"/>
    <property type="match status" value="1"/>
</dbReference>
<dbReference type="Pfam" id="PF03735">
    <property type="entry name" value="ENT"/>
    <property type="match status" value="1"/>
</dbReference>
<dbReference type="SMART" id="SM00743">
    <property type="entry name" value="Agenet"/>
    <property type="match status" value="1"/>
</dbReference>
<dbReference type="SMART" id="SM01191">
    <property type="entry name" value="ENT"/>
    <property type="match status" value="1"/>
</dbReference>
<dbReference type="SUPFAM" id="SSF158639">
    <property type="entry name" value="ENT-like"/>
    <property type="match status" value="1"/>
</dbReference>
<dbReference type="SUPFAM" id="SSF63748">
    <property type="entry name" value="Tudor/PWWP/MBT"/>
    <property type="match status" value="1"/>
</dbReference>
<dbReference type="PROSITE" id="PS51138">
    <property type="entry name" value="ENT"/>
    <property type="match status" value="1"/>
</dbReference>
<reference key="1">
    <citation type="journal article" date="2000" name="DNA Res.">
        <title>Structural analysis of Arabidopsis thaliana chromosome 3. II. Sequence features of the 4,251,695 bp regions covered by 90 P1, TAC and BAC clones.</title>
        <authorList>
            <person name="Kaneko T."/>
            <person name="Katoh T."/>
            <person name="Sato S."/>
            <person name="Nakamura Y."/>
            <person name="Asamizu E."/>
            <person name="Tabata S."/>
        </authorList>
    </citation>
    <scope>NUCLEOTIDE SEQUENCE [LARGE SCALE GENOMIC DNA]</scope>
    <source>
        <strain>cv. Columbia</strain>
    </source>
</reference>
<reference key="2">
    <citation type="journal article" date="2000" name="Nature">
        <title>Sequence and analysis of chromosome 3 of the plant Arabidopsis thaliana.</title>
        <authorList>
            <person name="Salanoubat M."/>
            <person name="Lemcke K."/>
            <person name="Rieger M."/>
            <person name="Ansorge W."/>
            <person name="Unseld M."/>
            <person name="Fartmann B."/>
            <person name="Valle G."/>
            <person name="Bloecker H."/>
            <person name="Perez-Alonso M."/>
            <person name="Obermaier B."/>
            <person name="Delseny M."/>
            <person name="Boutry M."/>
            <person name="Grivell L.A."/>
            <person name="Mache R."/>
            <person name="Puigdomenech P."/>
            <person name="De Simone V."/>
            <person name="Choisne N."/>
            <person name="Artiguenave F."/>
            <person name="Robert C."/>
            <person name="Brottier P."/>
            <person name="Wincker P."/>
            <person name="Cattolico L."/>
            <person name="Weissenbach J."/>
            <person name="Saurin W."/>
            <person name="Quetier F."/>
            <person name="Schaefer M."/>
            <person name="Mueller-Auer S."/>
            <person name="Gabel C."/>
            <person name="Fuchs M."/>
            <person name="Benes V."/>
            <person name="Wurmbach E."/>
            <person name="Drzonek H."/>
            <person name="Erfle H."/>
            <person name="Jordan N."/>
            <person name="Bangert S."/>
            <person name="Wiedelmann R."/>
            <person name="Kranz H."/>
            <person name="Voss H."/>
            <person name="Holland R."/>
            <person name="Brandt P."/>
            <person name="Nyakatura G."/>
            <person name="Vezzi A."/>
            <person name="D'Angelo M."/>
            <person name="Pallavicini A."/>
            <person name="Toppo S."/>
            <person name="Simionati B."/>
            <person name="Conrad A."/>
            <person name="Hornischer K."/>
            <person name="Kauer G."/>
            <person name="Loehnert T.-H."/>
            <person name="Nordsiek G."/>
            <person name="Reichelt J."/>
            <person name="Scharfe M."/>
            <person name="Schoen O."/>
            <person name="Bargues M."/>
            <person name="Terol J."/>
            <person name="Climent J."/>
            <person name="Navarro P."/>
            <person name="Collado C."/>
            <person name="Perez-Perez A."/>
            <person name="Ottenwaelder B."/>
            <person name="Duchemin D."/>
            <person name="Cooke R."/>
            <person name="Laudie M."/>
            <person name="Berger-Llauro C."/>
            <person name="Purnelle B."/>
            <person name="Masuy D."/>
            <person name="de Haan M."/>
            <person name="Maarse A.C."/>
            <person name="Alcaraz J.-P."/>
            <person name="Cottet A."/>
            <person name="Casacuberta E."/>
            <person name="Monfort A."/>
            <person name="Argiriou A."/>
            <person name="Flores M."/>
            <person name="Liguori R."/>
            <person name="Vitale D."/>
            <person name="Mannhaupt G."/>
            <person name="Haase D."/>
            <person name="Schoof H."/>
            <person name="Rudd S."/>
            <person name="Zaccaria P."/>
            <person name="Mewes H.-W."/>
            <person name="Mayer K.F.X."/>
            <person name="Kaul S."/>
            <person name="Town C.D."/>
            <person name="Koo H.L."/>
            <person name="Tallon L.J."/>
            <person name="Jenkins J."/>
            <person name="Rooney T."/>
            <person name="Rizzo M."/>
            <person name="Walts A."/>
            <person name="Utterback T."/>
            <person name="Fujii C.Y."/>
            <person name="Shea T.P."/>
            <person name="Creasy T.H."/>
            <person name="Haas B."/>
            <person name="Maiti R."/>
            <person name="Wu D."/>
            <person name="Peterson J."/>
            <person name="Van Aken S."/>
            <person name="Pai G."/>
            <person name="Militscher J."/>
            <person name="Sellers P."/>
            <person name="Gill J.E."/>
            <person name="Feldblyum T.V."/>
            <person name="Preuss D."/>
            <person name="Lin X."/>
            <person name="Nierman W.C."/>
            <person name="Salzberg S.L."/>
            <person name="White O."/>
            <person name="Venter J.C."/>
            <person name="Fraser C.M."/>
            <person name="Kaneko T."/>
            <person name="Nakamura Y."/>
            <person name="Sato S."/>
            <person name="Kato T."/>
            <person name="Asamizu E."/>
            <person name="Sasamoto S."/>
            <person name="Kimura T."/>
            <person name="Idesawa K."/>
            <person name="Kawashima K."/>
            <person name="Kishida Y."/>
            <person name="Kiyokawa C."/>
            <person name="Kohara M."/>
            <person name="Matsumoto M."/>
            <person name="Matsuno A."/>
            <person name="Muraki A."/>
            <person name="Nakayama S."/>
            <person name="Nakazaki N."/>
            <person name="Shinpo S."/>
            <person name="Takeuchi C."/>
            <person name="Wada T."/>
            <person name="Watanabe A."/>
            <person name="Yamada M."/>
            <person name="Yasuda M."/>
            <person name="Tabata S."/>
        </authorList>
    </citation>
    <scope>NUCLEOTIDE SEQUENCE [LARGE SCALE GENOMIC DNA]</scope>
    <source>
        <strain>cv. Columbia</strain>
    </source>
</reference>
<reference key="3">
    <citation type="journal article" date="2017" name="Plant J.">
        <title>Araport11: a complete reannotation of the Arabidopsis thaliana reference genome.</title>
        <authorList>
            <person name="Cheng C.Y."/>
            <person name="Krishnakumar V."/>
            <person name="Chan A.P."/>
            <person name="Thibaud-Nissen F."/>
            <person name="Schobel S."/>
            <person name="Town C.D."/>
        </authorList>
    </citation>
    <scope>GENOME REANNOTATION</scope>
    <source>
        <strain>cv. Columbia</strain>
    </source>
</reference>
<reference key="4">
    <citation type="journal article" date="2003" name="Science">
        <title>Empirical analysis of transcriptional activity in the Arabidopsis genome.</title>
        <authorList>
            <person name="Yamada K."/>
            <person name="Lim J."/>
            <person name="Dale J.M."/>
            <person name="Chen H."/>
            <person name="Shinn P."/>
            <person name="Palm C.J."/>
            <person name="Southwick A.M."/>
            <person name="Wu H.C."/>
            <person name="Kim C.J."/>
            <person name="Nguyen M."/>
            <person name="Pham P.K."/>
            <person name="Cheuk R.F."/>
            <person name="Karlin-Newmann G."/>
            <person name="Liu S.X."/>
            <person name="Lam B."/>
            <person name="Sakano H."/>
            <person name="Wu T."/>
            <person name="Yu G."/>
            <person name="Miranda M."/>
            <person name="Quach H.L."/>
            <person name="Tripp M."/>
            <person name="Chang C.H."/>
            <person name="Lee J.M."/>
            <person name="Toriumi M.J."/>
            <person name="Chan M.M."/>
            <person name="Tang C.C."/>
            <person name="Onodera C.S."/>
            <person name="Deng J.M."/>
            <person name="Akiyama K."/>
            <person name="Ansari Y."/>
            <person name="Arakawa T."/>
            <person name="Banh J."/>
            <person name="Banno F."/>
            <person name="Bowser L."/>
            <person name="Brooks S.Y."/>
            <person name="Carninci P."/>
            <person name="Chao Q."/>
            <person name="Choy N."/>
            <person name="Enju A."/>
            <person name="Goldsmith A.D."/>
            <person name="Gurjal M."/>
            <person name="Hansen N.F."/>
            <person name="Hayashizaki Y."/>
            <person name="Johnson-Hopson C."/>
            <person name="Hsuan V.W."/>
            <person name="Iida K."/>
            <person name="Karnes M."/>
            <person name="Khan S."/>
            <person name="Koesema E."/>
            <person name="Ishida J."/>
            <person name="Jiang P.X."/>
            <person name="Jones T."/>
            <person name="Kawai J."/>
            <person name="Kamiya A."/>
            <person name="Meyers C."/>
            <person name="Nakajima M."/>
            <person name="Narusaka M."/>
            <person name="Seki M."/>
            <person name="Sakurai T."/>
            <person name="Satou M."/>
            <person name="Tamse R."/>
            <person name="Vaysberg M."/>
            <person name="Wallender E.K."/>
            <person name="Wong C."/>
            <person name="Yamamura Y."/>
            <person name="Yuan S."/>
            <person name="Shinozaki K."/>
            <person name="Davis R.W."/>
            <person name="Theologis A."/>
            <person name="Ecker J.R."/>
        </authorList>
    </citation>
    <scope>NUCLEOTIDE SEQUENCE [LARGE SCALE MRNA] (ISOFORM 1)</scope>
    <source>
        <strain>cv. Columbia</strain>
    </source>
</reference>
<reference key="5">
    <citation type="submission" date="2006-07" db="EMBL/GenBank/DDBJ databases">
        <title>Large-scale analysis of RIKEN Arabidopsis full-length (RAFL) cDNAs.</title>
        <authorList>
            <person name="Totoki Y."/>
            <person name="Seki M."/>
            <person name="Ishida J."/>
            <person name="Nakajima M."/>
            <person name="Enju A."/>
            <person name="Kamiya A."/>
            <person name="Narusaka M."/>
            <person name="Shin-i T."/>
            <person name="Nakagawa M."/>
            <person name="Sakamoto N."/>
            <person name="Oishi K."/>
            <person name="Kohara Y."/>
            <person name="Kobayashi M."/>
            <person name="Toyoda A."/>
            <person name="Sakaki Y."/>
            <person name="Sakurai T."/>
            <person name="Iida K."/>
            <person name="Akiyama K."/>
            <person name="Satou M."/>
            <person name="Toyoda T."/>
            <person name="Konagaya A."/>
            <person name="Carninci P."/>
            <person name="Kawai J."/>
            <person name="Hayashizaki Y."/>
            <person name="Shinozaki K."/>
        </authorList>
    </citation>
    <scope>NUCLEOTIDE SEQUENCE [LARGE SCALE MRNA] (ISOFORM 1)</scope>
    <source>
        <strain>cv. Columbia</strain>
    </source>
</reference>
<reference key="6">
    <citation type="journal article" date="2009" name="Plant Physiol.">
        <title>Large-scale Arabidopsis phosphoproteome profiling reveals novel chloroplast kinase substrates and phosphorylation networks.</title>
        <authorList>
            <person name="Reiland S."/>
            <person name="Messerli G."/>
            <person name="Baerenfaller K."/>
            <person name="Gerrits B."/>
            <person name="Endler A."/>
            <person name="Grossmann J."/>
            <person name="Gruissem W."/>
            <person name="Baginsky S."/>
        </authorList>
    </citation>
    <scope>IDENTIFICATION BY MASS SPECTROMETRY [LARGE SCALE ANALYSIS]</scope>
</reference>
<reference key="7">
    <citation type="journal article" date="2011" name="Mol. Plant Microbe Interact.">
        <title>EMSY-like genes are required for full RPP7-mediated race-specific immunity and basal defense in Arabidopsis.</title>
        <authorList>
            <person name="Tsuchiya T."/>
            <person name="Eulgem T."/>
        </authorList>
    </citation>
    <scope>FUNCTION</scope>
    <scope>DISRUPTION PHENOTYPE</scope>
    <scope>ALTERNATIVE SPLICING</scope>
    <scope>SUBCELLULAR LOCATION</scope>
    <scope>INTERACTION WITH EDM2</scope>
    <scope>GENE FAMILY</scope>
    <scope>NOMENCLATURE</scope>
</reference>